<name>SPHI_ASPFC</name>
<proteinExistence type="evidence at protein level"/>
<organism>
    <name type="scientific">Aspergillus fumigatus (strain CBS 144.89 / FGSC A1163 / CEA10)</name>
    <name type="common">Neosartorya fumigata</name>
    <dbReference type="NCBI Taxonomy" id="451804"/>
    <lineage>
        <taxon>Eukaryota</taxon>
        <taxon>Fungi</taxon>
        <taxon>Dikarya</taxon>
        <taxon>Ascomycota</taxon>
        <taxon>Pezizomycotina</taxon>
        <taxon>Eurotiomycetes</taxon>
        <taxon>Eurotiomycetidae</taxon>
        <taxon>Eurotiales</taxon>
        <taxon>Aspergillaceae</taxon>
        <taxon>Aspergillus</taxon>
        <taxon>Aspergillus subgen. Fumigati</taxon>
    </lineage>
</organism>
<sequence length="333" mass="36548">MAHPLVFITGATGFLGSATAVAALKAGYRLRICVRKPSDELQNLLSGYSEQVEFVTVADWTAEGAFRGLLDGADYVIHLAHPIPSGPEKEYYFTPAVKATTALLREAARVPSIKKVVVTSSIAALMPLDGIPSGGVIKEDNDWDFDVDETEDFAASNDPRGIPMRLYHASKLLANQTAWEFRKTAKPPYALVTLHPAFVYGRNPVQTTAEAIQESSNGLLWHAIMTGVPHHSYSRVPGVHIDDVVEAHLRALDPAIPDGSKYLLAAKGGTWKEVADVIQRDYSYLGAKITPDIEEEFLSTDSSKAEAELGMRWRAWEQMVRDVVDQQLEFANV</sequence>
<comment type="function">
    <text evidence="3">Ketoreductase; part of the gene cluster that mediates the biosynthesis of sphingofungins, bioactive molecules acting as sphingolipid inhibitors via inhibiting serine palmitoyl transferase (SPT) (PubMed:35023724). Does not seem to be involved in any biosynthetic process leading to the production of sphingofungins, but might be connected to a regulation or resistance mechanism (PubMed:35023724).</text>
</comment>
<comment type="induction">
    <text evidence="3">Expression is positively regulated by the sphingofungins biosynthesis cluster-specific transcription factor sphG.</text>
</comment>
<comment type="disruption phenotype">
    <text evidence="3">Decreases overall sphingofungin levels.</text>
</comment>
<comment type="biotechnology">
    <text evidence="2">The sphingofungins A, B, C, and D, show a limited antifungal spectrum of activity but are especially effective against Cryptococcus species, fungal pathogens causing opportunistic infections in human.</text>
</comment>
<comment type="similarity">
    <text evidence="5">Belongs to the NAD(P)-dependent epimerase/dehydratase family. Dihydroflavonol-4-reductase subfamily.</text>
</comment>
<gene>
    <name evidence="4" type="primary">sphI</name>
    <name type="ORF">AFUB_034450</name>
</gene>
<accession>B0XZU9</accession>
<protein>
    <recommendedName>
        <fullName evidence="4">Ketoreductase sphI</fullName>
        <ecNumber evidence="6">1.-.-.-</ecNumber>
    </recommendedName>
    <alternativeName>
        <fullName evidence="4">Sphingofungin biosynthesis cluster protein I</fullName>
    </alternativeName>
</protein>
<reference key="1">
    <citation type="journal article" date="2008" name="PLoS Genet.">
        <title>Genomic islands in the pathogenic filamentous fungus Aspergillus fumigatus.</title>
        <authorList>
            <person name="Fedorova N.D."/>
            <person name="Khaldi N."/>
            <person name="Joardar V.S."/>
            <person name="Maiti R."/>
            <person name="Amedeo P."/>
            <person name="Anderson M.J."/>
            <person name="Crabtree J."/>
            <person name="Silva J.C."/>
            <person name="Badger J.H."/>
            <person name="Albarraq A."/>
            <person name="Angiuoli S."/>
            <person name="Bussey H."/>
            <person name="Bowyer P."/>
            <person name="Cotty P.J."/>
            <person name="Dyer P.S."/>
            <person name="Egan A."/>
            <person name="Galens K."/>
            <person name="Fraser-Liggett C.M."/>
            <person name="Haas B.J."/>
            <person name="Inman J.M."/>
            <person name="Kent R."/>
            <person name="Lemieux S."/>
            <person name="Malavazi I."/>
            <person name="Orvis J."/>
            <person name="Roemer T."/>
            <person name="Ronning C.M."/>
            <person name="Sundaram J.P."/>
            <person name="Sutton G."/>
            <person name="Turner G."/>
            <person name="Venter J.C."/>
            <person name="White O.R."/>
            <person name="Whitty B.R."/>
            <person name="Youngman P."/>
            <person name="Wolfe K.H."/>
            <person name="Goldman G.H."/>
            <person name="Wortman J.R."/>
            <person name="Jiang B."/>
            <person name="Denning D.W."/>
            <person name="Nierman W.C."/>
        </authorList>
    </citation>
    <scope>NUCLEOTIDE SEQUENCE [LARGE SCALE GENOMIC DNA]</scope>
    <source>
        <strain>CBS 144.89 / FGSC A1163 / CEA10</strain>
    </source>
</reference>
<reference key="2">
    <citation type="journal article" date="1992" name="J. Antibiot.">
        <title>Sphingofungins A, B, C, and D; a new family of antifungal agents. I. Fermentation, isolation, and biological activity.</title>
        <authorList>
            <person name="VanMiddlesworth F."/>
            <person name="Giacobbe R.A."/>
            <person name="Lopez M."/>
            <person name="Garrity G."/>
            <person name="Bland J.A."/>
            <person name="Bartizal K."/>
            <person name="Fromtling R.A."/>
            <person name="Polishook J."/>
            <person name="Zweerink M."/>
            <person name="Edison A.M."/>
        </authorList>
    </citation>
    <scope>BIOTECHNOLOGY</scope>
</reference>
<reference key="3">
    <citation type="journal article" date="2022" name="ACS Chem. Biol.">
        <title>Biosynthesis of the sphingolipid inhibitors sphingofungins in filamentous fungi requires aminomalonate as a metabolic precursor.</title>
        <authorList>
            <person name="Bissell A.U."/>
            <person name="Rautschek J."/>
            <person name="Hoefgen S."/>
            <person name="Raguz L."/>
            <person name="Mattern D.J."/>
            <person name="Saeed N."/>
            <person name="Janevska S."/>
            <person name="Jojic K."/>
            <person name="Huang Y."/>
            <person name="Kufs J.E."/>
            <person name="Herboeck B."/>
            <person name="Guo H."/>
            <person name="Hillmann F."/>
            <person name="Beemelmanns C."/>
            <person name="Valiante V."/>
        </authorList>
    </citation>
    <scope>FUNCTION</scope>
    <scope>INDUCTION</scope>
    <scope>DISRUPTION PHENOTYPE</scope>
</reference>
<dbReference type="EC" id="1.-.-.-" evidence="6"/>
<dbReference type="EMBL" id="DS499596">
    <property type="protein sequence ID" value="EDP52281.1"/>
    <property type="molecule type" value="Genomic_DNA"/>
</dbReference>
<dbReference type="SMR" id="B0XZU9"/>
<dbReference type="EnsemblFungi" id="EDP52281">
    <property type="protein sequence ID" value="EDP52281"/>
    <property type="gene ID" value="AFUB_034450"/>
</dbReference>
<dbReference type="VEuPathDB" id="FungiDB:AFUB_034450"/>
<dbReference type="HOGENOM" id="CLU_007383_9_2_1"/>
<dbReference type="OrthoDB" id="23610at5052"/>
<dbReference type="PhylomeDB" id="B0XZU9"/>
<dbReference type="Proteomes" id="UP000001699">
    <property type="component" value="Unassembled WGS sequence"/>
</dbReference>
<dbReference type="GO" id="GO:0016616">
    <property type="term" value="F:oxidoreductase activity, acting on the CH-OH group of donors, NAD or NADP as acceptor"/>
    <property type="evidence" value="ECO:0007669"/>
    <property type="project" value="TreeGrafter"/>
</dbReference>
<dbReference type="FunFam" id="3.40.50.720:FF:000426">
    <property type="entry name" value="Aldehyde reductase 2"/>
    <property type="match status" value="1"/>
</dbReference>
<dbReference type="Gene3D" id="3.40.50.720">
    <property type="entry name" value="NAD(P)-binding Rossmann-like Domain"/>
    <property type="match status" value="1"/>
</dbReference>
<dbReference type="InterPro" id="IPR001509">
    <property type="entry name" value="Epimerase_deHydtase"/>
</dbReference>
<dbReference type="InterPro" id="IPR036291">
    <property type="entry name" value="NAD(P)-bd_dom_sf"/>
</dbReference>
<dbReference type="InterPro" id="IPR050425">
    <property type="entry name" value="NAD(P)_dehydrat-like"/>
</dbReference>
<dbReference type="PANTHER" id="PTHR10366">
    <property type="entry name" value="NAD DEPENDENT EPIMERASE/DEHYDRATASE"/>
    <property type="match status" value="1"/>
</dbReference>
<dbReference type="PANTHER" id="PTHR10366:SF812">
    <property type="entry name" value="VPS9 DOMAIN-CONTAINING PROTEIN"/>
    <property type="match status" value="1"/>
</dbReference>
<dbReference type="Pfam" id="PF01370">
    <property type="entry name" value="Epimerase"/>
    <property type="match status" value="1"/>
</dbReference>
<dbReference type="SUPFAM" id="SSF51735">
    <property type="entry name" value="NAD(P)-binding Rossmann-fold domains"/>
    <property type="match status" value="1"/>
</dbReference>
<feature type="chain" id="PRO_0000461283" description="Ketoreductase sphI">
    <location>
        <begin position="1"/>
        <end position="333"/>
    </location>
</feature>
<feature type="binding site" evidence="1">
    <location>
        <position position="167"/>
    </location>
    <ligand>
        <name>NADP(+)</name>
        <dbReference type="ChEBI" id="CHEBI:58349"/>
    </ligand>
</feature>
<keyword id="KW-0521">NADP</keyword>
<keyword id="KW-0560">Oxidoreductase</keyword>
<evidence type="ECO:0000250" key="1">
    <source>
        <dbReference type="UniProtKB" id="A0A059TC02"/>
    </source>
</evidence>
<evidence type="ECO:0000269" key="2">
    <source>
    </source>
</evidence>
<evidence type="ECO:0000269" key="3">
    <source>
    </source>
</evidence>
<evidence type="ECO:0000303" key="4">
    <source>
    </source>
</evidence>
<evidence type="ECO:0000305" key="5"/>
<evidence type="ECO:0000305" key="6">
    <source>
    </source>
</evidence>